<protein>
    <recommendedName>
        <fullName evidence="1">UDP-N-acetylglucosamine--N-acetylmuramyl-(pentapeptide) pyrophosphoryl-undecaprenol N-acetylglucosamine transferase</fullName>
        <ecNumber evidence="1">2.4.1.227</ecNumber>
    </recommendedName>
    <alternativeName>
        <fullName evidence="1">Undecaprenyl-PP-MurNAc-pentapeptide-UDPGlcNAc GlcNAc transferase</fullName>
    </alternativeName>
</protein>
<feature type="chain" id="PRO_1000002611" description="UDP-N-acetylglucosamine--N-acetylmuramyl-(pentapeptide) pyrophosphoryl-undecaprenol N-acetylglucosamine transferase">
    <location>
        <begin position="1"/>
        <end position="357"/>
    </location>
</feature>
<feature type="binding site" evidence="1">
    <location>
        <begin position="12"/>
        <end position="14"/>
    </location>
    <ligand>
        <name>UDP-N-acetyl-alpha-D-glucosamine</name>
        <dbReference type="ChEBI" id="CHEBI:57705"/>
    </ligand>
</feature>
<feature type="binding site" evidence="1">
    <location>
        <position position="124"/>
    </location>
    <ligand>
        <name>UDP-N-acetyl-alpha-D-glucosamine</name>
        <dbReference type="ChEBI" id="CHEBI:57705"/>
    </ligand>
</feature>
<feature type="binding site" evidence="1">
    <location>
        <position position="162"/>
    </location>
    <ligand>
        <name>UDP-N-acetyl-alpha-D-glucosamine</name>
        <dbReference type="ChEBI" id="CHEBI:57705"/>
    </ligand>
</feature>
<feature type="binding site" evidence="1">
    <location>
        <position position="190"/>
    </location>
    <ligand>
        <name>UDP-N-acetyl-alpha-D-glucosamine</name>
        <dbReference type="ChEBI" id="CHEBI:57705"/>
    </ligand>
</feature>
<feature type="binding site" evidence="1">
    <location>
        <position position="244"/>
    </location>
    <ligand>
        <name>UDP-N-acetyl-alpha-D-glucosamine</name>
        <dbReference type="ChEBI" id="CHEBI:57705"/>
    </ligand>
</feature>
<feature type="binding site" evidence="1">
    <location>
        <begin position="263"/>
        <end position="268"/>
    </location>
    <ligand>
        <name>UDP-N-acetyl-alpha-D-glucosamine</name>
        <dbReference type="ChEBI" id="CHEBI:57705"/>
    </ligand>
</feature>
<feature type="binding site" evidence="1">
    <location>
        <position position="289"/>
    </location>
    <ligand>
        <name>UDP-N-acetyl-alpha-D-glucosamine</name>
        <dbReference type="ChEBI" id="CHEBI:57705"/>
    </ligand>
</feature>
<name>MURG_ALKEH</name>
<reference key="1">
    <citation type="submission" date="2006-08" db="EMBL/GenBank/DDBJ databases">
        <title>Complete sequence of Alkalilimnicola ehrilichei MLHE-1.</title>
        <authorList>
            <person name="Copeland A."/>
            <person name="Lucas S."/>
            <person name="Lapidus A."/>
            <person name="Barry K."/>
            <person name="Detter J.C."/>
            <person name="Glavina del Rio T."/>
            <person name="Hammon N."/>
            <person name="Israni S."/>
            <person name="Dalin E."/>
            <person name="Tice H."/>
            <person name="Pitluck S."/>
            <person name="Sims D."/>
            <person name="Brettin T."/>
            <person name="Bruce D."/>
            <person name="Han C."/>
            <person name="Tapia R."/>
            <person name="Gilna P."/>
            <person name="Schmutz J."/>
            <person name="Larimer F."/>
            <person name="Land M."/>
            <person name="Hauser L."/>
            <person name="Kyrpides N."/>
            <person name="Mikhailova N."/>
            <person name="Oremland R.S."/>
            <person name="Hoeft S.E."/>
            <person name="Switzer-Blum J."/>
            <person name="Kulp T."/>
            <person name="King G."/>
            <person name="Tabita R."/>
            <person name="Witte B."/>
            <person name="Santini J.M."/>
            <person name="Basu P."/>
            <person name="Hollibaugh J.T."/>
            <person name="Xie G."/>
            <person name="Stolz J.F."/>
            <person name="Richardson P."/>
        </authorList>
    </citation>
    <scope>NUCLEOTIDE SEQUENCE [LARGE SCALE GENOMIC DNA]</scope>
    <source>
        <strain>ATCC BAA-1101 / DSM 17681 / MLHE-1</strain>
    </source>
</reference>
<keyword id="KW-0131">Cell cycle</keyword>
<keyword id="KW-0132">Cell division</keyword>
<keyword id="KW-0997">Cell inner membrane</keyword>
<keyword id="KW-1003">Cell membrane</keyword>
<keyword id="KW-0133">Cell shape</keyword>
<keyword id="KW-0961">Cell wall biogenesis/degradation</keyword>
<keyword id="KW-0328">Glycosyltransferase</keyword>
<keyword id="KW-0472">Membrane</keyword>
<keyword id="KW-0573">Peptidoglycan synthesis</keyword>
<keyword id="KW-1185">Reference proteome</keyword>
<keyword id="KW-0808">Transferase</keyword>
<evidence type="ECO:0000255" key="1">
    <source>
        <dbReference type="HAMAP-Rule" id="MF_00033"/>
    </source>
</evidence>
<organism>
    <name type="scientific">Alkalilimnicola ehrlichii (strain ATCC BAA-1101 / DSM 17681 / MLHE-1)</name>
    <dbReference type="NCBI Taxonomy" id="187272"/>
    <lineage>
        <taxon>Bacteria</taxon>
        <taxon>Pseudomonadati</taxon>
        <taxon>Pseudomonadota</taxon>
        <taxon>Gammaproteobacteria</taxon>
        <taxon>Chromatiales</taxon>
        <taxon>Ectothiorhodospiraceae</taxon>
        <taxon>Alkalilimnicola</taxon>
    </lineage>
</organism>
<comment type="function">
    <text evidence="1">Cell wall formation. Catalyzes the transfer of a GlcNAc subunit on undecaprenyl-pyrophosphoryl-MurNAc-pentapeptide (lipid intermediate I) to form undecaprenyl-pyrophosphoryl-MurNAc-(pentapeptide)GlcNAc (lipid intermediate II).</text>
</comment>
<comment type="catalytic activity">
    <reaction evidence="1">
        <text>di-trans,octa-cis-undecaprenyl diphospho-N-acetyl-alpha-D-muramoyl-L-alanyl-D-glutamyl-meso-2,6-diaminopimeloyl-D-alanyl-D-alanine + UDP-N-acetyl-alpha-D-glucosamine = di-trans,octa-cis-undecaprenyl diphospho-[N-acetyl-alpha-D-glucosaminyl-(1-&gt;4)]-N-acetyl-alpha-D-muramoyl-L-alanyl-D-glutamyl-meso-2,6-diaminopimeloyl-D-alanyl-D-alanine + UDP + H(+)</text>
        <dbReference type="Rhea" id="RHEA:31227"/>
        <dbReference type="ChEBI" id="CHEBI:15378"/>
        <dbReference type="ChEBI" id="CHEBI:57705"/>
        <dbReference type="ChEBI" id="CHEBI:58223"/>
        <dbReference type="ChEBI" id="CHEBI:61387"/>
        <dbReference type="ChEBI" id="CHEBI:61388"/>
        <dbReference type="EC" id="2.4.1.227"/>
    </reaction>
</comment>
<comment type="pathway">
    <text evidence="1">Cell wall biogenesis; peptidoglycan biosynthesis.</text>
</comment>
<comment type="subcellular location">
    <subcellularLocation>
        <location evidence="1">Cell inner membrane</location>
        <topology evidence="1">Peripheral membrane protein</topology>
        <orientation evidence="1">Cytoplasmic side</orientation>
    </subcellularLocation>
</comment>
<comment type="similarity">
    <text evidence="1">Belongs to the glycosyltransferase 28 family. MurG subfamily.</text>
</comment>
<accession>Q0A6K2</accession>
<dbReference type="EC" id="2.4.1.227" evidence="1"/>
<dbReference type="EMBL" id="CP000453">
    <property type="protein sequence ID" value="ABI57535.1"/>
    <property type="molecule type" value="Genomic_DNA"/>
</dbReference>
<dbReference type="RefSeq" id="WP_011629929.1">
    <property type="nucleotide sequence ID" value="NC_008340.1"/>
</dbReference>
<dbReference type="SMR" id="Q0A6K2"/>
<dbReference type="CAZy" id="GT28">
    <property type="family name" value="Glycosyltransferase Family 28"/>
</dbReference>
<dbReference type="KEGG" id="aeh:Mlg_2193"/>
<dbReference type="eggNOG" id="COG0707">
    <property type="taxonomic scope" value="Bacteria"/>
</dbReference>
<dbReference type="HOGENOM" id="CLU_037404_2_0_6"/>
<dbReference type="OrthoDB" id="9808936at2"/>
<dbReference type="UniPathway" id="UPA00219"/>
<dbReference type="Proteomes" id="UP000001962">
    <property type="component" value="Chromosome"/>
</dbReference>
<dbReference type="GO" id="GO:0005886">
    <property type="term" value="C:plasma membrane"/>
    <property type="evidence" value="ECO:0007669"/>
    <property type="project" value="UniProtKB-SubCell"/>
</dbReference>
<dbReference type="GO" id="GO:0051991">
    <property type="term" value="F:UDP-N-acetyl-D-glucosamine:N-acetylmuramoyl-L-alanyl-D-glutamyl-meso-2,6-diaminopimelyl-D-alanyl-D-alanine-diphosphoundecaprenol 4-beta-N-acetylglucosaminlytransferase activity"/>
    <property type="evidence" value="ECO:0007669"/>
    <property type="project" value="RHEA"/>
</dbReference>
<dbReference type="GO" id="GO:0050511">
    <property type="term" value="F:undecaprenyldiphospho-muramoylpentapeptide beta-N-acetylglucosaminyltransferase activity"/>
    <property type="evidence" value="ECO:0007669"/>
    <property type="project" value="UniProtKB-UniRule"/>
</dbReference>
<dbReference type="GO" id="GO:0005975">
    <property type="term" value="P:carbohydrate metabolic process"/>
    <property type="evidence" value="ECO:0007669"/>
    <property type="project" value="InterPro"/>
</dbReference>
<dbReference type="GO" id="GO:0051301">
    <property type="term" value="P:cell division"/>
    <property type="evidence" value="ECO:0007669"/>
    <property type="project" value="UniProtKB-KW"/>
</dbReference>
<dbReference type="GO" id="GO:0071555">
    <property type="term" value="P:cell wall organization"/>
    <property type="evidence" value="ECO:0007669"/>
    <property type="project" value="UniProtKB-KW"/>
</dbReference>
<dbReference type="GO" id="GO:0030259">
    <property type="term" value="P:lipid glycosylation"/>
    <property type="evidence" value="ECO:0007669"/>
    <property type="project" value="UniProtKB-UniRule"/>
</dbReference>
<dbReference type="GO" id="GO:0009252">
    <property type="term" value="P:peptidoglycan biosynthetic process"/>
    <property type="evidence" value="ECO:0007669"/>
    <property type="project" value="UniProtKB-UniRule"/>
</dbReference>
<dbReference type="GO" id="GO:0008360">
    <property type="term" value="P:regulation of cell shape"/>
    <property type="evidence" value="ECO:0007669"/>
    <property type="project" value="UniProtKB-KW"/>
</dbReference>
<dbReference type="CDD" id="cd03785">
    <property type="entry name" value="GT28_MurG"/>
    <property type="match status" value="1"/>
</dbReference>
<dbReference type="Gene3D" id="3.40.50.2000">
    <property type="entry name" value="Glycogen Phosphorylase B"/>
    <property type="match status" value="2"/>
</dbReference>
<dbReference type="HAMAP" id="MF_00033">
    <property type="entry name" value="MurG"/>
    <property type="match status" value="1"/>
</dbReference>
<dbReference type="InterPro" id="IPR006009">
    <property type="entry name" value="GlcNAc_MurG"/>
</dbReference>
<dbReference type="InterPro" id="IPR007235">
    <property type="entry name" value="Glyco_trans_28_C"/>
</dbReference>
<dbReference type="InterPro" id="IPR004276">
    <property type="entry name" value="GlycoTrans_28_N"/>
</dbReference>
<dbReference type="NCBIfam" id="TIGR01133">
    <property type="entry name" value="murG"/>
    <property type="match status" value="1"/>
</dbReference>
<dbReference type="PANTHER" id="PTHR21015:SF22">
    <property type="entry name" value="GLYCOSYLTRANSFERASE"/>
    <property type="match status" value="1"/>
</dbReference>
<dbReference type="PANTHER" id="PTHR21015">
    <property type="entry name" value="UDP-N-ACETYLGLUCOSAMINE--N-ACETYLMURAMYL-(PENTAPEPTIDE) PYROPHOSPHORYL-UNDECAPRENOL N-ACETYLGLUCOSAMINE TRANSFERASE 1"/>
    <property type="match status" value="1"/>
</dbReference>
<dbReference type="Pfam" id="PF04101">
    <property type="entry name" value="Glyco_tran_28_C"/>
    <property type="match status" value="1"/>
</dbReference>
<dbReference type="Pfam" id="PF03033">
    <property type="entry name" value="Glyco_transf_28"/>
    <property type="match status" value="1"/>
</dbReference>
<dbReference type="SUPFAM" id="SSF53756">
    <property type="entry name" value="UDP-Glycosyltransferase/glycogen phosphorylase"/>
    <property type="match status" value="1"/>
</dbReference>
<gene>
    <name evidence="1" type="primary">murG</name>
    <name type="ordered locus">Mlg_2193</name>
</gene>
<proteinExistence type="inferred from homology"/>
<sequence>MTMPVLIMAGGTGGHVFPALAVAERLREQGVPVVWLGTREGLEARVVPAADIPLESLRVRGLRGNGLRGWLAAPFVLLRALWQALGVLRRHRPRAVLGMGGYAAGPGAVAAWLTRRPLIIHEQNAVAGLTNRLLSRLARRVLTGFPGILPERGGEHVGNPVRDAITRVPGPADRGAGAHEPLRLLVVGGSLGALALNSTVPAALARLPEVQRPVVRHQAGERTLQQAREAYDQAGIAVDLQPFIEDMAAAWTWADLAICRAGALTVAELEAVGVPAILVPLPGAVDDHQTANARQFVAAGAGVLLPQSELSAQRLALELKTLLADPPRLQRMAQCARGLGRPDAAATVARICLEEAR</sequence>